<gene>
    <name type="ordered locus">LSEI_1022</name>
</gene>
<comment type="subcellular location">
    <subcellularLocation>
        <location evidence="1">Cytoplasm</location>
    </subcellularLocation>
</comment>
<comment type="similarity">
    <text evidence="1">Belongs to the TACO1 family.</text>
</comment>
<organism>
    <name type="scientific">Lacticaseibacillus paracasei (strain ATCC 334 / BCRC 17002 / CCUG 31169 / CIP 107868 / KCTC 3260 / NRRL B-441)</name>
    <name type="common">Lactobacillus paracasei</name>
    <dbReference type="NCBI Taxonomy" id="321967"/>
    <lineage>
        <taxon>Bacteria</taxon>
        <taxon>Bacillati</taxon>
        <taxon>Bacillota</taxon>
        <taxon>Bacilli</taxon>
        <taxon>Lactobacillales</taxon>
        <taxon>Lactobacillaceae</taxon>
        <taxon>Lacticaseibacillus</taxon>
    </lineage>
</organism>
<proteinExistence type="inferred from homology"/>
<protein>
    <recommendedName>
        <fullName evidence="1">Probable transcriptional regulatory protein LSEI_1022</fullName>
    </recommendedName>
</protein>
<evidence type="ECO:0000255" key="1">
    <source>
        <dbReference type="HAMAP-Rule" id="MF_00693"/>
    </source>
</evidence>
<evidence type="ECO:0000256" key="2">
    <source>
        <dbReference type="SAM" id="MobiDB-lite"/>
    </source>
</evidence>
<dbReference type="EMBL" id="CP000423">
    <property type="protein sequence ID" value="ABJ69817.1"/>
    <property type="molecule type" value="Genomic_DNA"/>
</dbReference>
<dbReference type="RefSeq" id="WP_011674355.1">
    <property type="nucleotide sequence ID" value="NC_008526.1"/>
</dbReference>
<dbReference type="RefSeq" id="YP_806259.1">
    <property type="nucleotide sequence ID" value="NC_008526.1"/>
</dbReference>
<dbReference type="SMR" id="Q03AF5"/>
<dbReference type="STRING" id="321967.LSEI_1022"/>
<dbReference type="PaxDb" id="321967-LSEI_1022"/>
<dbReference type="KEGG" id="lca:LSEI_1022"/>
<dbReference type="PATRIC" id="fig|321967.11.peg.995"/>
<dbReference type="HOGENOM" id="CLU_062974_3_0_9"/>
<dbReference type="Proteomes" id="UP000001651">
    <property type="component" value="Chromosome"/>
</dbReference>
<dbReference type="GO" id="GO:0005829">
    <property type="term" value="C:cytosol"/>
    <property type="evidence" value="ECO:0007669"/>
    <property type="project" value="TreeGrafter"/>
</dbReference>
<dbReference type="GO" id="GO:0003677">
    <property type="term" value="F:DNA binding"/>
    <property type="evidence" value="ECO:0007669"/>
    <property type="project" value="UniProtKB-UniRule"/>
</dbReference>
<dbReference type="GO" id="GO:0006355">
    <property type="term" value="P:regulation of DNA-templated transcription"/>
    <property type="evidence" value="ECO:0007669"/>
    <property type="project" value="UniProtKB-UniRule"/>
</dbReference>
<dbReference type="FunFam" id="1.10.10.200:FF:000002">
    <property type="entry name" value="Probable transcriptional regulatory protein CLM62_37755"/>
    <property type="match status" value="1"/>
</dbReference>
<dbReference type="FunFam" id="3.30.70.980:FF:000002">
    <property type="entry name" value="Probable transcriptional regulatory protein YebC"/>
    <property type="match status" value="1"/>
</dbReference>
<dbReference type="Gene3D" id="1.10.10.200">
    <property type="match status" value="1"/>
</dbReference>
<dbReference type="Gene3D" id="3.30.70.980">
    <property type="match status" value="2"/>
</dbReference>
<dbReference type="HAMAP" id="MF_00693">
    <property type="entry name" value="Transcrip_reg_TACO1"/>
    <property type="match status" value="1"/>
</dbReference>
<dbReference type="InterPro" id="IPR017856">
    <property type="entry name" value="Integrase-like_N"/>
</dbReference>
<dbReference type="InterPro" id="IPR048300">
    <property type="entry name" value="TACO1_YebC-like_2nd/3rd_dom"/>
</dbReference>
<dbReference type="InterPro" id="IPR049083">
    <property type="entry name" value="TACO1_YebC_N"/>
</dbReference>
<dbReference type="InterPro" id="IPR002876">
    <property type="entry name" value="Transcrip_reg_TACO1-like"/>
</dbReference>
<dbReference type="InterPro" id="IPR026564">
    <property type="entry name" value="Transcrip_reg_TACO1-like_dom3"/>
</dbReference>
<dbReference type="InterPro" id="IPR029072">
    <property type="entry name" value="YebC-like"/>
</dbReference>
<dbReference type="NCBIfam" id="NF001030">
    <property type="entry name" value="PRK00110.1"/>
    <property type="match status" value="1"/>
</dbReference>
<dbReference type="NCBIfam" id="NF009044">
    <property type="entry name" value="PRK12378.1"/>
    <property type="match status" value="1"/>
</dbReference>
<dbReference type="NCBIfam" id="TIGR01033">
    <property type="entry name" value="YebC/PmpR family DNA-binding transcriptional regulator"/>
    <property type="match status" value="1"/>
</dbReference>
<dbReference type="PANTHER" id="PTHR12532:SF6">
    <property type="entry name" value="TRANSCRIPTIONAL REGULATORY PROTEIN YEBC-RELATED"/>
    <property type="match status" value="1"/>
</dbReference>
<dbReference type="PANTHER" id="PTHR12532">
    <property type="entry name" value="TRANSLATIONAL ACTIVATOR OF CYTOCHROME C OXIDASE 1"/>
    <property type="match status" value="1"/>
</dbReference>
<dbReference type="Pfam" id="PF20772">
    <property type="entry name" value="TACO1_YebC_N"/>
    <property type="match status" value="1"/>
</dbReference>
<dbReference type="Pfam" id="PF01709">
    <property type="entry name" value="Transcrip_reg"/>
    <property type="match status" value="1"/>
</dbReference>
<dbReference type="SUPFAM" id="SSF75625">
    <property type="entry name" value="YebC-like"/>
    <property type="match status" value="1"/>
</dbReference>
<feature type="chain" id="PRO_1000045324" description="Probable transcriptional regulatory protein LSEI_1022">
    <location>
        <begin position="1"/>
        <end position="243"/>
    </location>
</feature>
<feature type="region of interest" description="Disordered" evidence="2">
    <location>
        <begin position="1"/>
        <end position="23"/>
    </location>
</feature>
<keyword id="KW-0963">Cytoplasm</keyword>
<keyword id="KW-0238">DNA-binding</keyword>
<keyword id="KW-1185">Reference proteome</keyword>
<keyword id="KW-0804">Transcription</keyword>
<keyword id="KW-0805">Transcription regulation</keyword>
<accession>Q03AF5</accession>
<reference key="1">
    <citation type="journal article" date="2006" name="Proc. Natl. Acad. Sci. U.S.A.">
        <title>Comparative genomics of the lactic acid bacteria.</title>
        <authorList>
            <person name="Makarova K.S."/>
            <person name="Slesarev A."/>
            <person name="Wolf Y.I."/>
            <person name="Sorokin A."/>
            <person name="Mirkin B."/>
            <person name="Koonin E.V."/>
            <person name="Pavlov A."/>
            <person name="Pavlova N."/>
            <person name="Karamychev V."/>
            <person name="Polouchine N."/>
            <person name="Shakhova V."/>
            <person name="Grigoriev I."/>
            <person name="Lou Y."/>
            <person name="Rohksar D."/>
            <person name="Lucas S."/>
            <person name="Huang K."/>
            <person name="Goodstein D.M."/>
            <person name="Hawkins T."/>
            <person name="Plengvidhya V."/>
            <person name="Welker D."/>
            <person name="Hughes J."/>
            <person name="Goh Y."/>
            <person name="Benson A."/>
            <person name="Baldwin K."/>
            <person name="Lee J.-H."/>
            <person name="Diaz-Muniz I."/>
            <person name="Dosti B."/>
            <person name="Smeianov V."/>
            <person name="Wechter W."/>
            <person name="Barabote R."/>
            <person name="Lorca G."/>
            <person name="Altermann E."/>
            <person name="Barrangou R."/>
            <person name="Ganesan B."/>
            <person name="Xie Y."/>
            <person name="Rawsthorne H."/>
            <person name="Tamir D."/>
            <person name="Parker C."/>
            <person name="Breidt F."/>
            <person name="Broadbent J.R."/>
            <person name="Hutkins R."/>
            <person name="O'Sullivan D."/>
            <person name="Steele J."/>
            <person name="Unlu G."/>
            <person name="Saier M.H. Jr."/>
            <person name="Klaenhammer T."/>
            <person name="Richardson P."/>
            <person name="Kozyavkin S."/>
            <person name="Weimer B.C."/>
            <person name="Mills D.A."/>
        </authorList>
    </citation>
    <scope>NUCLEOTIDE SEQUENCE [LARGE SCALE GENOMIC DNA]</scope>
    <source>
        <strain>ATCC 334 / BCRC 17002 / CCUG 31169 / CIP 107868 / KCTC 3260 / NRRL B-441</strain>
    </source>
</reference>
<sequence length="243" mass="27106">MSGHSKWHNIQGRKNAQDSKRGKIFQKLSRELYMAAKQGGPDPSGNPSLRLVMDKAKAANMPKDNIKRALDKASDRDAANYDEVTYEGYGPGGVAILVEALTDNRNRTSSTVRVAITRHGGNMAAAGAVSYMFDRKGYLVISRDDLDVDEDQMLEDALEAGAEDMQTSDEAFEIYTDPKEFAQVRDALEEKGYKFVQNELTMVPQNLTPIPEDKVEKFQAMIDQLEDDDDVQEVYTAGDWPDD</sequence>
<name>Y1022_LACP3</name>